<evidence type="ECO:0000250" key="1"/>
<evidence type="ECO:0000255" key="2">
    <source>
        <dbReference type="PROSITE-ProRule" id="PRU01185"/>
    </source>
</evidence>
<evidence type="ECO:0000305" key="3"/>
<accession>Q6CU48</accession>
<proteinExistence type="inferred from homology"/>
<protein>
    <recommendedName>
        <fullName>COP9 signalosome complex subunit 11</fullName>
    </recommendedName>
</protein>
<reference key="1">
    <citation type="journal article" date="2004" name="Nature">
        <title>Genome evolution in yeasts.</title>
        <authorList>
            <person name="Dujon B."/>
            <person name="Sherman D."/>
            <person name="Fischer G."/>
            <person name="Durrens P."/>
            <person name="Casaregola S."/>
            <person name="Lafontaine I."/>
            <person name="de Montigny J."/>
            <person name="Marck C."/>
            <person name="Neuveglise C."/>
            <person name="Talla E."/>
            <person name="Goffard N."/>
            <person name="Frangeul L."/>
            <person name="Aigle M."/>
            <person name="Anthouard V."/>
            <person name="Babour A."/>
            <person name="Barbe V."/>
            <person name="Barnay S."/>
            <person name="Blanchin S."/>
            <person name="Beckerich J.-M."/>
            <person name="Beyne E."/>
            <person name="Bleykasten C."/>
            <person name="Boisrame A."/>
            <person name="Boyer J."/>
            <person name="Cattolico L."/>
            <person name="Confanioleri F."/>
            <person name="de Daruvar A."/>
            <person name="Despons L."/>
            <person name="Fabre E."/>
            <person name="Fairhead C."/>
            <person name="Ferry-Dumazet H."/>
            <person name="Groppi A."/>
            <person name="Hantraye F."/>
            <person name="Hennequin C."/>
            <person name="Jauniaux N."/>
            <person name="Joyet P."/>
            <person name="Kachouri R."/>
            <person name="Kerrest A."/>
            <person name="Koszul R."/>
            <person name="Lemaire M."/>
            <person name="Lesur I."/>
            <person name="Ma L."/>
            <person name="Muller H."/>
            <person name="Nicaud J.-M."/>
            <person name="Nikolski M."/>
            <person name="Oztas S."/>
            <person name="Ozier-Kalogeropoulos O."/>
            <person name="Pellenz S."/>
            <person name="Potier S."/>
            <person name="Richard G.-F."/>
            <person name="Straub M.-L."/>
            <person name="Suleau A."/>
            <person name="Swennen D."/>
            <person name="Tekaia F."/>
            <person name="Wesolowski-Louvel M."/>
            <person name="Westhof E."/>
            <person name="Wirth B."/>
            <person name="Zeniou-Meyer M."/>
            <person name="Zivanovic Y."/>
            <person name="Bolotin-Fukuhara M."/>
            <person name="Thierry A."/>
            <person name="Bouchier C."/>
            <person name="Caudron B."/>
            <person name="Scarpelli C."/>
            <person name="Gaillardin C."/>
            <person name="Weissenbach J."/>
            <person name="Wincker P."/>
            <person name="Souciet J.-L."/>
        </authorList>
    </citation>
    <scope>NUCLEOTIDE SEQUENCE [LARGE SCALE GENOMIC DNA]</scope>
    <source>
        <strain>ATCC 8585 / CBS 2359 / DSM 70799 / NBRC 1267 / NRRL Y-1140 / WM37</strain>
    </source>
</reference>
<organism>
    <name type="scientific">Kluyveromyces lactis (strain ATCC 8585 / CBS 2359 / DSM 70799 / NBRC 1267 / NRRL Y-1140 / WM37)</name>
    <name type="common">Yeast</name>
    <name type="synonym">Candida sphaerica</name>
    <dbReference type="NCBI Taxonomy" id="284590"/>
    <lineage>
        <taxon>Eukaryota</taxon>
        <taxon>Fungi</taxon>
        <taxon>Dikarya</taxon>
        <taxon>Ascomycota</taxon>
        <taxon>Saccharomycotina</taxon>
        <taxon>Saccharomycetes</taxon>
        <taxon>Saccharomycetales</taxon>
        <taxon>Saccharomycetaceae</taxon>
        <taxon>Kluyveromyces</taxon>
    </lineage>
</organism>
<dbReference type="EMBL" id="CR382123">
    <property type="protein sequence ID" value="CAH01392.1"/>
    <property type="molecule type" value="Genomic_DNA"/>
</dbReference>
<dbReference type="RefSeq" id="XP_452541.1">
    <property type="nucleotide sequence ID" value="XM_452541.1"/>
</dbReference>
<dbReference type="FunCoup" id="Q6CU48">
    <property type="interactions" value="85"/>
</dbReference>
<dbReference type="STRING" id="284590.Q6CU48"/>
<dbReference type="PaxDb" id="284590-Q6CU48"/>
<dbReference type="KEGG" id="kla:KLLA0_C07667g"/>
<dbReference type="eggNOG" id="ENOG502RK42">
    <property type="taxonomic scope" value="Eukaryota"/>
</dbReference>
<dbReference type="HOGENOM" id="CLU_051217_0_0_1"/>
<dbReference type="InParanoid" id="Q6CU48"/>
<dbReference type="OMA" id="WNTEINE"/>
<dbReference type="Proteomes" id="UP000000598">
    <property type="component" value="Chromosome C"/>
</dbReference>
<dbReference type="GO" id="GO:0008180">
    <property type="term" value="C:COP9 signalosome"/>
    <property type="evidence" value="ECO:0007669"/>
    <property type="project" value="UniProtKB-KW"/>
</dbReference>
<dbReference type="GO" id="GO:0005737">
    <property type="term" value="C:cytoplasm"/>
    <property type="evidence" value="ECO:0007669"/>
    <property type="project" value="UniProtKB-SubCell"/>
</dbReference>
<dbReference type="GO" id="GO:0008541">
    <property type="term" value="C:proteasome regulatory particle, lid subcomplex"/>
    <property type="evidence" value="ECO:0007669"/>
    <property type="project" value="UniProtKB-ARBA"/>
</dbReference>
<dbReference type="Gene3D" id="1.25.40.570">
    <property type="match status" value="1"/>
</dbReference>
<dbReference type="InterPro" id="IPR000717">
    <property type="entry name" value="PCI_dom"/>
</dbReference>
<dbReference type="InterPro" id="IPR036390">
    <property type="entry name" value="WH_DNA-bd_sf"/>
</dbReference>
<dbReference type="SUPFAM" id="SSF46785">
    <property type="entry name" value="Winged helix' DNA-binding domain"/>
    <property type="match status" value="1"/>
</dbReference>
<dbReference type="PROSITE" id="PS50250">
    <property type="entry name" value="PCI"/>
    <property type="match status" value="1"/>
</dbReference>
<feature type="chain" id="PRO_0000121027" description="COP9 signalosome complex subunit 11">
    <location>
        <begin position="1"/>
        <end position="389"/>
    </location>
</feature>
<feature type="domain" description="PCI" evidence="2">
    <location>
        <begin position="143"/>
        <end position="312"/>
    </location>
</feature>
<sequence length="389" mass="46145">MTQGRLFYPLAVLQDRHFRSKYPNYNESRELKTWSVVSKRFPAWEQKLVSMLLDNKYAESIIFINSDVSMSSVGVFKRTKLLIRTHILNSHYKAVIDFESRLNTQPITSEPTELADFIECKLLLILNWFLRGEYHQCLQRFIQLIIDIPNLVELMVTLPKDDIFISNETMFYIITVSALVSIPLDNLDTFIHLEELEQFHKHFDVLAGKGKLIINSKFMKFFDWWHNDMERLCKQDYFLEKKWDIISKTMRQKMYAFYLRIATKIQISYLSERVGISREIVTQEITQLISEACLNFQIHDDLILYQKFDPQMALNDLMMTEDITLDNKLSQLRRQNHNLRVIVDEHLALRKSRIQRRSKASDEEPMNEEEVFALSENELCNETADTFND</sequence>
<name>CSN11_KLULA</name>
<gene>
    <name type="primary">PCI8</name>
    <name type="synonym">CSN11</name>
    <name type="ordered locus">KLLA0C07667g</name>
</gene>
<keyword id="KW-0963">Cytoplasm</keyword>
<keyword id="KW-0539">Nucleus</keyword>
<keyword id="KW-1185">Reference proteome</keyword>
<keyword id="KW-0736">Signalosome</keyword>
<comment type="function">
    <text evidence="1">Component of the COP9 signalosome (CSN) complex that acts as an regulator of the ubiquitin (Ubl) conjugation pathway by mediating the deneddylation of the cullin subunit of SCF-type E3 ubiquitin-protein ligase complexes The CSN complex is involved in the regulation of the mating pheromone response. PCI8 may also be involved in transcriptional and translational control (By similarity).</text>
</comment>
<comment type="subunit">
    <text evidence="1">Component of a COP9 signalosome-like (CSN) complex.</text>
</comment>
<comment type="subcellular location">
    <subcellularLocation>
        <location evidence="3">Cytoplasm</location>
    </subcellularLocation>
    <subcellularLocation>
        <location evidence="3">Nucleus</location>
    </subcellularLocation>
</comment>